<sequence length="418" mass="47239">MNIFEELKARGLVFQTTDEQALVKALTEGQVSYYTGYDPTADSLHLGHLVAILTSRRLQLAGHKPYALVGGATGLIGDPSFKDAERSLQTKETVLEWSDKIKGQLSAFLDFENGDNKAELVNNYDWFSQISFIDFLRDVGKYFTVNYMMSKDSVKKRIETGISYTEFAYQIMQGYDFYELNDKHNVTLQIGGSDQWGNMTAGTELLRKKADKTGHVMTVPLITDSTGKKFGKSEGNAVWLDADKTSPYEMYQFWLNVMDDDAVRFLKIFTFLSLDEIAEIETQFNAARHERLAQKTLAREVVTLVHGEEAYKQALNITEQLFAGNIKNLSANELKQGLSNVPNYHVQSEDSLNLVDMLVTAGISPSKRQAREDVQNGAIYINGDRVQDLDYQLSNDDKIDDQLTVIRRGKKKYAVLTY</sequence>
<feature type="chain" id="PRO_0000234794" description="Tyrosine--tRNA ligase">
    <location>
        <begin position="1"/>
        <end position="418"/>
    </location>
</feature>
<feature type="domain" description="S4 RNA-binding" evidence="1">
    <location>
        <begin position="352"/>
        <end position="418"/>
    </location>
</feature>
<feature type="short sequence motif" description="'HIGH' region">
    <location>
        <begin position="39"/>
        <end position="48"/>
    </location>
</feature>
<feature type="short sequence motif" description="'KMSKS' region">
    <location>
        <begin position="229"/>
        <end position="233"/>
    </location>
</feature>
<feature type="binding site" evidence="1">
    <location>
        <position position="34"/>
    </location>
    <ligand>
        <name>L-tyrosine</name>
        <dbReference type="ChEBI" id="CHEBI:58315"/>
    </ligand>
</feature>
<feature type="binding site" evidence="1">
    <location>
        <position position="169"/>
    </location>
    <ligand>
        <name>L-tyrosine</name>
        <dbReference type="ChEBI" id="CHEBI:58315"/>
    </ligand>
</feature>
<feature type="binding site" evidence="1">
    <location>
        <position position="173"/>
    </location>
    <ligand>
        <name>L-tyrosine</name>
        <dbReference type="ChEBI" id="CHEBI:58315"/>
    </ligand>
</feature>
<feature type="binding site" evidence="1">
    <location>
        <position position="232"/>
    </location>
    <ligand>
        <name>ATP</name>
        <dbReference type="ChEBI" id="CHEBI:30616"/>
    </ligand>
</feature>
<keyword id="KW-0030">Aminoacyl-tRNA synthetase</keyword>
<keyword id="KW-0067">ATP-binding</keyword>
<keyword id="KW-0963">Cytoplasm</keyword>
<keyword id="KW-0436">Ligase</keyword>
<keyword id="KW-0547">Nucleotide-binding</keyword>
<keyword id="KW-0648">Protein biosynthesis</keyword>
<keyword id="KW-0694">RNA-binding</keyword>
<reference key="1">
    <citation type="journal article" date="2004" name="J. Infect. Dis.">
        <title>Progress toward characterization of the group A Streptococcus metagenome: complete genome sequence of a macrolide-resistant serotype M6 strain.</title>
        <authorList>
            <person name="Banks D.J."/>
            <person name="Porcella S.F."/>
            <person name="Barbian K.D."/>
            <person name="Beres S.B."/>
            <person name="Philips L.E."/>
            <person name="Voyich J.M."/>
            <person name="DeLeo F.R."/>
            <person name="Martin J.M."/>
            <person name="Somerville G.A."/>
            <person name="Musser J.M."/>
        </authorList>
    </citation>
    <scope>NUCLEOTIDE SEQUENCE [LARGE SCALE GENOMIC DNA]</scope>
    <source>
        <strain>ATCC BAA-946 / MGAS10394</strain>
    </source>
</reference>
<organism>
    <name type="scientific">Streptococcus pyogenes serotype M6 (strain ATCC BAA-946 / MGAS10394)</name>
    <dbReference type="NCBI Taxonomy" id="286636"/>
    <lineage>
        <taxon>Bacteria</taxon>
        <taxon>Bacillati</taxon>
        <taxon>Bacillota</taxon>
        <taxon>Bacilli</taxon>
        <taxon>Lactobacillales</taxon>
        <taxon>Streptococcaceae</taxon>
        <taxon>Streptococcus</taxon>
    </lineage>
</organism>
<protein>
    <recommendedName>
        <fullName evidence="1">Tyrosine--tRNA ligase</fullName>
        <ecNumber evidence="1">6.1.1.1</ecNumber>
    </recommendedName>
    <alternativeName>
        <fullName evidence="1">Tyrosyl-tRNA synthetase</fullName>
        <shortName evidence="1">TyrRS</shortName>
    </alternativeName>
</protein>
<name>SYY_STRP6</name>
<gene>
    <name evidence="1" type="primary">tyrS</name>
    <name type="ordered locus">M6_Spy0129</name>
</gene>
<dbReference type="EC" id="6.1.1.1" evidence="1"/>
<dbReference type="EMBL" id="CP000003">
    <property type="protein sequence ID" value="AAT86264.1"/>
    <property type="molecule type" value="Genomic_DNA"/>
</dbReference>
<dbReference type="RefSeq" id="WP_011184085.1">
    <property type="nucleotide sequence ID" value="NC_006086.1"/>
</dbReference>
<dbReference type="SMR" id="Q5XE99"/>
<dbReference type="KEGG" id="spa:M6_Spy0129"/>
<dbReference type="HOGENOM" id="CLU_024003_0_3_9"/>
<dbReference type="Proteomes" id="UP000001167">
    <property type="component" value="Chromosome"/>
</dbReference>
<dbReference type="GO" id="GO:0005829">
    <property type="term" value="C:cytosol"/>
    <property type="evidence" value="ECO:0007669"/>
    <property type="project" value="TreeGrafter"/>
</dbReference>
<dbReference type="GO" id="GO:0005524">
    <property type="term" value="F:ATP binding"/>
    <property type="evidence" value="ECO:0007669"/>
    <property type="project" value="UniProtKB-UniRule"/>
</dbReference>
<dbReference type="GO" id="GO:0003723">
    <property type="term" value="F:RNA binding"/>
    <property type="evidence" value="ECO:0007669"/>
    <property type="project" value="UniProtKB-KW"/>
</dbReference>
<dbReference type="GO" id="GO:0004831">
    <property type="term" value="F:tyrosine-tRNA ligase activity"/>
    <property type="evidence" value="ECO:0007669"/>
    <property type="project" value="UniProtKB-UniRule"/>
</dbReference>
<dbReference type="GO" id="GO:0006437">
    <property type="term" value="P:tyrosyl-tRNA aminoacylation"/>
    <property type="evidence" value="ECO:0007669"/>
    <property type="project" value="UniProtKB-UniRule"/>
</dbReference>
<dbReference type="CDD" id="cd00165">
    <property type="entry name" value="S4"/>
    <property type="match status" value="1"/>
</dbReference>
<dbReference type="CDD" id="cd00805">
    <property type="entry name" value="TyrRS_core"/>
    <property type="match status" value="1"/>
</dbReference>
<dbReference type="FunFam" id="1.10.240.10:FF:000001">
    <property type="entry name" value="Tyrosine--tRNA ligase"/>
    <property type="match status" value="1"/>
</dbReference>
<dbReference type="FunFam" id="3.40.50.620:FF:000008">
    <property type="entry name" value="Tyrosine--tRNA ligase"/>
    <property type="match status" value="1"/>
</dbReference>
<dbReference type="Gene3D" id="3.40.50.620">
    <property type="entry name" value="HUPs"/>
    <property type="match status" value="1"/>
</dbReference>
<dbReference type="Gene3D" id="3.10.290.10">
    <property type="entry name" value="RNA-binding S4 domain"/>
    <property type="match status" value="1"/>
</dbReference>
<dbReference type="Gene3D" id="1.10.240.10">
    <property type="entry name" value="Tyrosyl-Transfer RNA Synthetase"/>
    <property type="match status" value="1"/>
</dbReference>
<dbReference type="HAMAP" id="MF_02006">
    <property type="entry name" value="Tyr_tRNA_synth_type1"/>
    <property type="match status" value="1"/>
</dbReference>
<dbReference type="InterPro" id="IPR001412">
    <property type="entry name" value="aa-tRNA-synth_I_CS"/>
</dbReference>
<dbReference type="InterPro" id="IPR002305">
    <property type="entry name" value="aa-tRNA-synth_Ic"/>
</dbReference>
<dbReference type="InterPro" id="IPR014729">
    <property type="entry name" value="Rossmann-like_a/b/a_fold"/>
</dbReference>
<dbReference type="InterPro" id="IPR002942">
    <property type="entry name" value="S4_RNA-bd"/>
</dbReference>
<dbReference type="InterPro" id="IPR036986">
    <property type="entry name" value="S4_RNA-bd_sf"/>
</dbReference>
<dbReference type="InterPro" id="IPR054608">
    <property type="entry name" value="SYY-like_C"/>
</dbReference>
<dbReference type="InterPro" id="IPR002307">
    <property type="entry name" value="Tyr-tRNA-ligase"/>
</dbReference>
<dbReference type="InterPro" id="IPR024088">
    <property type="entry name" value="Tyr-tRNA-ligase_bac-type"/>
</dbReference>
<dbReference type="InterPro" id="IPR024107">
    <property type="entry name" value="Tyr-tRNA-ligase_bac_1"/>
</dbReference>
<dbReference type="NCBIfam" id="TIGR00234">
    <property type="entry name" value="tyrS"/>
    <property type="match status" value="1"/>
</dbReference>
<dbReference type="PANTHER" id="PTHR11766:SF0">
    <property type="entry name" value="TYROSINE--TRNA LIGASE, MITOCHONDRIAL"/>
    <property type="match status" value="1"/>
</dbReference>
<dbReference type="PANTHER" id="PTHR11766">
    <property type="entry name" value="TYROSYL-TRNA SYNTHETASE"/>
    <property type="match status" value="1"/>
</dbReference>
<dbReference type="Pfam" id="PF22421">
    <property type="entry name" value="SYY_C-terminal"/>
    <property type="match status" value="1"/>
</dbReference>
<dbReference type="Pfam" id="PF00579">
    <property type="entry name" value="tRNA-synt_1b"/>
    <property type="match status" value="1"/>
</dbReference>
<dbReference type="PRINTS" id="PR01040">
    <property type="entry name" value="TRNASYNTHTYR"/>
</dbReference>
<dbReference type="SMART" id="SM00363">
    <property type="entry name" value="S4"/>
    <property type="match status" value="1"/>
</dbReference>
<dbReference type="SUPFAM" id="SSF55174">
    <property type="entry name" value="Alpha-L RNA-binding motif"/>
    <property type="match status" value="1"/>
</dbReference>
<dbReference type="SUPFAM" id="SSF52374">
    <property type="entry name" value="Nucleotidylyl transferase"/>
    <property type="match status" value="1"/>
</dbReference>
<dbReference type="PROSITE" id="PS00178">
    <property type="entry name" value="AA_TRNA_LIGASE_I"/>
    <property type="match status" value="1"/>
</dbReference>
<dbReference type="PROSITE" id="PS50889">
    <property type="entry name" value="S4"/>
    <property type="match status" value="1"/>
</dbReference>
<comment type="function">
    <text evidence="1">Catalyzes the attachment of tyrosine to tRNA(Tyr) in a two-step reaction: tyrosine is first activated by ATP to form Tyr-AMP and then transferred to the acceptor end of tRNA(Tyr).</text>
</comment>
<comment type="catalytic activity">
    <reaction evidence="1">
        <text>tRNA(Tyr) + L-tyrosine + ATP = L-tyrosyl-tRNA(Tyr) + AMP + diphosphate + H(+)</text>
        <dbReference type="Rhea" id="RHEA:10220"/>
        <dbReference type="Rhea" id="RHEA-COMP:9706"/>
        <dbReference type="Rhea" id="RHEA-COMP:9707"/>
        <dbReference type="ChEBI" id="CHEBI:15378"/>
        <dbReference type="ChEBI" id="CHEBI:30616"/>
        <dbReference type="ChEBI" id="CHEBI:33019"/>
        <dbReference type="ChEBI" id="CHEBI:58315"/>
        <dbReference type="ChEBI" id="CHEBI:78442"/>
        <dbReference type="ChEBI" id="CHEBI:78536"/>
        <dbReference type="ChEBI" id="CHEBI:456215"/>
        <dbReference type="EC" id="6.1.1.1"/>
    </reaction>
</comment>
<comment type="subunit">
    <text evidence="1">Homodimer.</text>
</comment>
<comment type="subcellular location">
    <subcellularLocation>
        <location evidence="1">Cytoplasm</location>
    </subcellularLocation>
</comment>
<comment type="similarity">
    <text evidence="1">Belongs to the class-I aminoacyl-tRNA synthetase family. TyrS type 1 subfamily.</text>
</comment>
<accession>Q5XE99</accession>
<proteinExistence type="inferred from homology"/>
<evidence type="ECO:0000255" key="1">
    <source>
        <dbReference type="HAMAP-Rule" id="MF_02006"/>
    </source>
</evidence>